<feature type="signal peptide" evidence="1">
    <location>
        <begin position="1"/>
        <end position="32"/>
    </location>
</feature>
<feature type="chain" id="PRO_0000045970" description="Ripening-related protein 3">
    <location>
        <begin position="33"/>
        <end position="213"/>
    </location>
</feature>
<proteinExistence type="evidence at transcript level"/>
<protein>
    <recommendedName>
        <fullName>Ripening-related protein 3</fullName>
    </recommendedName>
</protein>
<accession>Q9FWT5</accession>
<accession>A3C5Z7</accession>
<accession>Q0IWS8</accession>
<accession>Q7XD62</accession>
<name>RIP3_ORYSJ</name>
<dbReference type="EMBL" id="AC023240">
    <property type="protein sequence ID" value="AAG13531.1"/>
    <property type="molecule type" value="Genomic_DNA"/>
</dbReference>
<dbReference type="EMBL" id="AC146481">
    <property type="protein sequence ID" value="AAR87371.1"/>
    <property type="molecule type" value="Genomic_DNA"/>
</dbReference>
<dbReference type="EMBL" id="DP000086">
    <property type="protein sequence ID" value="AAP54385.1"/>
    <property type="molecule type" value="Genomic_DNA"/>
</dbReference>
<dbReference type="EMBL" id="AP008216">
    <property type="protein sequence ID" value="BAF26837.1"/>
    <property type="molecule type" value="Genomic_DNA"/>
</dbReference>
<dbReference type="EMBL" id="AP014966">
    <property type="protein sequence ID" value="BAT11420.1"/>
    <property type="molecule type" value="Genomic_DNA"/>
</dbReference>
<dbReference type="EMBL" id="CM000147">
    <property type="protein sequence ID" value="EAZ16510.1"/>
    <property type="molecule type" value="Genomic_DNA"/>
</dbReference>
<dbReference type="EMBL" id="AK102387">
    <property type="protein sequence ID" value="BAG95532.1"/>
    <property type="molecule type" value="mRNA"/>
</dbReference>
<dbReference type="RefSeq" id="XP_015613330.1">
    <property type="nucleotide sequence ID" value="XM_015757844.1"/>
</dbReference>
<dbReference type="SMR" id="Q9FWT5"/>
<dbReference type="FunCoup" id="Q9FWT5">
    <property type="interactions" value="3"/>
</dbReference>
<dbReference type="STRING" id="39947.Q9FWT5"/>
<dbReference type="PaxDb" id="39947-Q9FWT5"/>
<dbReference type="EnsemblPlants" id="Os10t0490100-01">
    <property type="protein sequence ID" value="Os10t0490100-01"/>
    <property type="gene ID" value="Os10g0490100"/>
</dbReference>
<dbReference type="Gramene" id="Os10t0490100-01">
    <property type="protein sequence ID" value="Os10t0490100-01"/>
    <property type="gene ID" value="Os10g0490100"/>
</dbReference>
<dbReference type="KEGG" id="dosa:Os10g0490100"/>
<dbReference type="eggNOG" id="ENOG502QQ0R">
    <property type="taxonomic scope" value="Eukaryota"/>
</dbReference>
<dbReference type="HOGENOM" id="CLU_047639_4_2_1"/>
<dbReference type="InParanoid" id="Q9FWT5"/>
<dbReference type="OMA" id="QYTTYAC"/>
<dbReference type="OrthoDB" id="406505at2759"/>
<dbReference type="Proteomes" id="UP000000763">
    <property type="component" value="Chromosome 10"/>
</dbReference>
<dbReference type="Proteomes" id="UP000007752">
    <property type="component" value="Chromosome 10"/>
</dbReference>
<dbReference type="Proteomes" id="UP000059680">
    <property type="component" value="Chromosome 10"/>
</dbReference>
<dbReference type="GO" id="GO:0005576">
    <property type="term" value="C:extracellular region"/>
    <property type="evidence" value="ECO:0007669"/>
    <property type="project" value="UniProtKB-SubCell"/>
</dbReference>
<dbReference type="CDD" id="cd22270">
    <property type="entry name" value="DPBB_kiwellin-like"/>
    <property type="match status" value="1"/>
</dbReference>
<dbReference type="Gene3D" id="2.40.40.10">
    <property type="entry name" value="RlpA-like domain"/>
    <property type="match status" value="1"/>
</dbReference>
<dbReference type="InterPro" id="IPR039271">
    <property type="entry name" value="Kiwellin-like"/>
</dbReference>
<dbReference type="InterPro" id="IPR036908">
    <property type="entry name" value="RlpA-like_sf"/>
</dbReference>
<dbReference type="PANTHER" id="PTHR33191">
    <property type="entry name" value="RIPENING-RELATED PROTEIN 2-RELATED"/>
    <property type="match status" value="1"/>
</dbReference>
<dbReference type="PANTHER" id="PTHR33191:SF27">
    <property type="entry name" value="RIPENING-RELATED PROTEIN 3"/>
    <property type="match status" value="1"/>
</dbReference>
<dbReference type="Pfam" id="PF24300">
    <property type="entry name" value="KWL1"/>
    <property type="match status" value="1"/>
</dbReference>
<dbReference type="SUPFAM" id="SSF50685">
    <property type="entry name" value="Barwin-like endoglucanases"/>
    <property type="match status" value="1"/>
</dbReference>
<sequence length="213" mass="21603">MAGAMTMSRRRLSHALLLVLAILPNLAALAVAAGGGSGGGGFFPHRSLLQSSSCQPSGAITGTSGDCNADNGSECCQDGVQYMTYACSPPVAAGGTGTAALLTLNSFADGGDGGGAPSCTGRFYDDGQLVVALSTGWFDGRSRCEKDVVIRASGGASVTAMVVDECDSQRGCDSDHNFEPPCRNNIVDGSPAVWDALGLNKDDGEAQITWSDA</sequence>
<keyword id="KW-1185">Reference proteome</keyword>
<keyword id="KW-0964">Secreted</keyword>
<keyword id="KW-0732">Signal</keyword>
<comment type="subcellular location">
    <subcellularLocation>
        <location evidence="2">Secreted</location>
    </subcellularLocation>
</comment>
<comment type="similarity">
    <text evidence="2">Belongs to the kiwellin family.</text>
</comment>
<evidence type="ECO:0000255" key="1"/>
<evidence type="ECO:0000305" key="2"/>
<evidence type="ECO:0000312" key="3">
    <source>
        <dbReference type="EMBL" id="EAZ16510.1"/>
    </source>
</evidence>
<gene>
    <name type="ordered locus">Os10g0490100</name>
    <name type="ordered locus">LOC_Os10g34840</name>
    <name type="ORF">B1288B10.12</name>
    <name evidence="3" type="ORF">OsJ_31982</name>
    <name type="ORF">OSJNBa0051D19.24</name>
</gene>
<reference key="1">
    <citation type="journal article" date="2003" name="Science">
        <title>In-depth view of structure, activity, and evolution of rice chromosome 10.</title>
        <authorList>
            <person name="Yu Y."/>
            <person name="Rambo T."/>
            <person name="Currie J."/>
            <person name="Saski C."/>
            <person name="Kim H.-R."/>
            <person name="Collura K."/>
            <person name="Thompson S."/>
            <person name="Simmons J."/>
            <person name="Yang T.-J."/>
            <person name="Nah G."/>
            <person name="Patel A.J."/>
            <person name="Thurmond S."/>
            <person name="Henry D."/>
            <person name="Oates R."/>
            <person name="Palmer M."/>
            <person name="Pries G."/>
            <person name="Gibson J."/>
            <person name="Anderson H."/>
            <person name="Paradkar M."/>
            <person name="Crane L."/>
            <person name="Dale J."/>
            <person name="Carver M.B."/>
            <person name="Wood T."/>
            <person name="Frisch D."/>
            <person name="Engler F."/>
            <person name="Soderlund C."/>
            <person name="Palmer L.E."/>
            <person name="Teytelman L."/>
            <person name="Nascimento L."/>
            <person name="De la Bastide M."/>
            <person name="Spiegel L."/>
            <person name="Ware D."/>
            <person name="O'Shaughnessy A."/>
            <person name="Dike S."/>
            <person name="Dedhia N."/>
            <person name="Preston R."/>
            <person name="Huang E."/>
            <person name="Ferraro K."/>
            <person name="Kuit K."/>
            <person name="Miller B."/>
            <person name="Zutavern T."/>
            <person name="Katzenberger F."/>
            <person name="Muller S."/>
            <person name="Balija V."/>
            <person name="Martienssen R.A."/>
            <person name="Stein L."/>
            <person name="Minx P."/>
            <person name="Johnson D."/>
            <person name="Cordum H."/>
            <person name="Mardis E."/>
            <person name="Cheng Z."/>
            <person name="Jiang J."/>
            <person name="Wilson R."/>
            <person name="McCombie W.R."/>
            <person name="Wing R.A."/>
            <person name="Yuan Q."/>
            <person name="Ouyang S."/>
            <person name="Liu J."/>
            <person name="Jones K.M."/>
            <person name="Gansberger K."/>
            <person name="Moffat K."/>
            <person name="Hill J."/>
            <person name="Tsitrin T."/>
            <person name="Overton L."/>
            <person name="Bera J."/>
            <person name="Kim M."/>
            <person name="Jin S."/>
            <person name="Tallon L."/>
            <person name="Ciecko A."/>
            <person name="Pai G."/>
            <person name="Van Aken S."/>
            <person name="Utterback T."/>
            <person name="Reidmuller S."/>
            <person name="Bormann J."/>
            <person name="Feldblyum T."/>
            <person name="Hsiao J."/>
            <person name="Zismann V."/>
            <person name="Blunt S."/>
            <person name="de Vazeille A.R."/>
            <person name="Shaffer T."/>
            <person name="Koo H."/>
            <person name="Suh B."/>
            <person name="Yang Q."/>
            <person name="Haas B."/>
            <person name="Peterson J."/>
            <person name="Pertea M."/>
            <person name="Volfovsky N."/>
            <person name="Wortman J."/>
            <person name="White O."/>
            <person name="Salzberg S.L."/>
            <person name="Fraser C.M."/>
            <person name="Buell C.R."/>
            <person name="Messing J."/>
            <person name="Song R."/>
            <person name="Fuks G."/>
            <person name="Llaca V."/>
            <person name="Kovchak S."/>
            <person name="Young S."/>
            <person name="Bowers J.E."/>
            <person name="Paterson A.H."/>
            <person name="Johns M.A."/>
            <person name="Mao L."/>
            <person name="Pan H."/>
            <person name="Dean R.A."/>
        </authorList>
    </citation>
    <scope>NUCLEOTIDE SEQUENCE [LARGE SCALE GENOMIC DNA]</scope>
    <source>
        <strain>cv. Nipponbare</strain>
    </source>
</reference>
<reference key="2">
    <citation type="journal article" date="2005" name="Nature">
        <title>The map-based sequence of the rice genome.</title>
        <authorList>
            <consortium name="International rice genome sequencing project (IRGSP)"/>
        </authorList>
    </citation>
    <scope>NUCLEOTIDE SEQUENCE [LARGE SCALE GENOMIC DNA]</scope>
    <source>
        <strain>cv. Nipponbare</strain>
    </source>
</reference>
<reference key="3">
    <citation type="journal article" date="2008" name="Nucleic Acids Res.">
        <title>The rice annotation project database (RAP-DB): 2008 update.</title>
        <authorList>
            <consortium name="The rice annotation project (RAP)"/>
        </authorList>
    </citation>
    <scope>GENOME REANNOTATION</scope>
    <source>
        <strain>cv. Nipponbare</strain>
    </source>
</reference>
<reference key="4">
    <citation type="journal article" date="2013" name="Rice">
        <title>Improvement of the Oryza sativa Nipponbare reference genome using next generation sequence and optical map data.</title>
        <authorList>
            <person name="Kawahara Y."/>
            <person name="de la Bastide M."/>
            <person name="Hamilton J.P."/>
            <person name="Kanamori H."/>
            <person name="McCombie W.R."/>
            <person name="Ouyang S."/>
            <person name="Schwartz D.C."/>
            <person name="Tanaka T."/>
            <person name="Wu J."/>
            <person name="Zhou S."/>
            <person name="Childs K.L."/>
            <person name="Davidson R.M."/>
            <person name="Lin H."/>
            <person name="Quesada-Ocampo L."/>
            <person name="Vaillancourt B."/>
            <person name="Sakai H."/>
            <person name="Lee S.S."/>
            <person name="Kim J."/>
            <person name="Numa H."/>
            <person name="Itoh T."/>
            <person name="Buell C.R."/>
            <person name="Matsumoto T."/>
        </authorList>
    </citation>
    <scope>GENOME REANNOTATION</scope>
    <source>
        <strain>cv. Nipponbare</strain>
    </source>
</reference>
<reference key="5">
    <citation type="journal article" date="2005" name="PLoS Biol.">
        <title>The genomes of Oryza sativa: a history of duplications.</title>
        <authorList>
            <person name="Yu J."/>
            <person name="Wang J."/>
            <person name="Lin W."/>
            <person name="Li S."/>
            <person name="Li H."/>
            <person name="Zhou J."/>
            <person name="Ni P."/>
            <person name="Dong W."/>
            <person name="Hu S."/>
            <person name="Zeng C."/>
            <person name="Zhang J."/>
            <person name="Zhang Y."/>
            <person name="Li R."/>
            <person name="Xu Z."/>
            <person name="Li S."/>
            <person name="Li X."/>
            <person name="Zheng H."/>
            <person name="Cong L."/>
            <person name="Lin L."/>
            <person name="Yin J."/>
            <person name="Geng J."/>
            <person name="Li G."/>
            <person name="Shi J."/>
            <person name="Liu J."/>
            <person name="Lv H."/>
            <person name="Li J."/>
            <person name="Wang J."/>
            <person name="Deng Y."/>
            <person name="Ran L."/>
            <person name="Shi X."/>
            <person name="Wang X."/>
            <person name="Wu Q."/>
            <person name="Li C."/>
            <person name="Ren X."/>
            <person name="Wang J."/>
            <person name="Wang X."/>
            <person name="Li D."/>
            <person name="Liu D."/>
            <person name="Zhang X."/>
            <person name="Ji Z."/>
            <person name="Zhao W."/>
            <person name="Sun Y."/>
            <person name="Zhang Z."/>
            <person name="Bao J."/>
            <person name="Han Y."/>
            <person name="Dong L."/>
            <person name="Ji J."/>
            <person name="Chen P."/>
            <person name="Wu S."/>
            <person name="Liu J."/>
            <person name="Xiao Y."/>
            <person name="Bu D."/>
            <person name="Tan J."/>
            <person name="Yang L."/>
            <person name="Ye C."/>
            <person name="Zhang J."/>
            <person name="Xu J."/>
            <person name="Zhou Y."/>
            <person name="Yu Y."/>
            <person name="Zhang B."/>
            <person name="Zhuang S."/>
            <person name="Wei H."/>
            <person name="Liu B."/>
            <person name="Lei M."/>
            <person name="Yu H."/>
            <person name="Li Y."/>
            <person name="Xu H."/>
            <person name="Wei S."/>
            <person name="He X."/>
            <person name="Fang L."/>
            <person name="Zhang Z."/>
            <person name="Zhang Y."/>
            <person name="Huang X."/>
            <person name="Su Z."/>
            <person name="Tong W."/>
            <person name="Li J."/>
            <person name="Tong Z."/>
            <person name="Li S."/>
            <person name="Ye J."/>
            <person name="Wang L."/>
            <person name="Fang L."/>
            <person name="Lei T."/>
            <person name="Chen C.-S."/>
            <person name="Chen H.-C."/>
            <person name="Xu Z."/>
            <person name="Li H."/>
            <person name="Huang H."/>
            <person name="Zhang F."/>
            <person name="Xu H."/>
            <person name="Li N."/>
            <person name="Zhao C."/>
            <person name="Li S."/>
            <person name="Dong L."/>
            <person name="Huang Y."/>
            <person name="Li L."/>
            <person name="Xi Y."/>
            <person name="Qi Q."/>
            <person name="Li W."/>
            <person name="Zhang B."/>
            <person name="Hu W."/>
            <person name="Zhang Y."/>
            <person name="Tian X."/>
            <person name="Jiao Y."/>
            <person name="Liang X."/>
            <person name="Jin J."/>
            <person name="Gao L."/>
            <person name="Zheng W."/>
            <person name="Hao B."/>
            <person name="Liu S.-M."/>
            <person name="Wang W."/>
            <person name="Yuan L."/>
            <person name="Cao M."/>
            <person name="McDermott J."/>
            <person name="Samudrala R."/>
            <person name="Wang J."/>
            <person name="Wong G.K.-S."/>
            <person name="Yang H."/>
        </authorList>
    </citation>
    <scope>NUCLEOTIDE SEQUENCE [LARGE SCALE GENOMIC DNA]</scope>
    <source>
        <strain>cv. Nipponbare</strain>
    </source>
</reference>
<reference key="6">
    <citation type="journal article" date="2003" name="Science">
        <title>Collection, mapping, and annotation of over 28,000 cDNA clones from japonica rice.</title>
        <authorList>
            <consortium name="The rice full-length cDNA consortium"/>
        </authorList>
    </citation>
    <scope>NUCLEOTIDE SEQUENCE [LARGE SCALE MRNA]</scope>
    <source>
        <strain>cv. Nipponbare</strain>
    </source>
</reference>
<organism>
    <name type="scientific">Oryza sativa subsp. japonica</name>
    <name type="common">Rice</name>
    <dbReference type="NCBI Taxonomy" id="39947"/>
    <lineage>
        <taxon>Eukaryota</taxon>
        <taxon>Viridiplantae</taxon>
        <taxon>Streptophyta</taxon>
        <taxon>Embryophyta</taxon>
        <taxon>Tracheophyta</taxon>
        <taxon>Spermatophyta</taxon>
        <taxon>Magnoliopsida</taxon>
        <taxon>Liliopsida</taxon>
        <taxon>Poales</taxon>
        <taxon>Poaceae</taxon>
        <taxon>BOP clade</taxon>
        <taxon>Oryzoideae</taxon>
        <taxon>Oryzeae</taxon>
        <taxon>Oryzinae</taxon>
        <taxon>Oryza</taxon>
        <taxon>Oryza sativa</taxon>
    </lineage>
</organism>